<proteinExistence type="predicted"/>
<dbReference type="EMBL" id="BX571857">
    <property type="protein sequence ID" value="CAG43966.1"/>
    <property type="molecule type" value="Genomic_DNA"/>
</dbReference>
<dbReference type="RefSeq" id="WP_000951060.1">
    <property type="nucleotide sequence ID" value="NC_002953.3"/>
</dbReference>
<dbReference type="SMR" id="Q6G757"/>
<dbReference type="KEGG" id="sas:SAS2155"/>
<dbReference type="HOGENOM" id="CLU_083287_18_2_9"/>
<dbReference type="GO" id="GO:0003677">
    <property type="term" value="F:DNA binding"/>
    <property type="evidence" value="ECO:0007669"/>
    <property type="project" value="UniProtKB-KW"/>
</dbReference>
<dbReference type="GO" id="GO:0003700">
    <property type="term" value="F:DNA-binding transcription factor activity"/>
    <property type="evidence" value="ECO:0007669"/>
    <property type="project" value="InterPro"/>
</dbReference>
<dbReference type="GO" id="GO:0006950">
    <property type="term" value="P:response to stress"/>
    <property type="evidence" value="ECO:0007669"/>
    <property type="project" value="TreeGrafter"/>
</dbReference>
<dbReference type="Gene3D" id="1.10.10.10">
    <property type="entry name" value="Winged helix-like DNA-binding domain superfamily/Winged helix DNA-binding domain"/>
    <property type="match status" value="1"/>
</dbReference>
<dbReference type="InterPro" id="IPR000835">
    <property type="entry name" value="HTH_MarR-typ"/>
</dbReference>
<dbReference type="InterPro" id="IPR039422">
    <property type="entry name" value="MarR/SlyA-like"/>
</dbReference>
<dbReference type="InterPro" id="IPR023187">
    <property type="entry name" value="Tscrpt_reg_MarR-type_CS"/>
</dbReference>
<dbReference type="InterPro" id="IPR036388">
    <property type="entry name" value="WH-like_DNA-bd_sf"/>
</dbReference>
<dbReference type="InterPro" id="IPR036390">
    <property type="entry name" value="WH_DNA-bd_sf"/>
</dbReference>
<dbReference type="PANTHER" id="PTHR33164">
    <property type="entry name" value="TRANSCRIPTIONAL REGULATOR, MARR FAMILY"/>
    <property type="match status" value="1"/>
</dbReference>
<dbReference type="PANTHER" id="PTHR33164:SF44">
    <property type="entry name" value="TRANSCRIPTIONAL REGULATORY PROTEIN"/>
    <property type="match status" value="1"/>
</dbReference>
<dbReference type="Pfam" id="PF01047">
    <property type="entry name" value="MarR"/>
    <property type="match status" value="1"/>
</dbReference>
<dbReference type="SMART" id="SM00347">
    <property type="entry name" value="HTH_MARR"/>
    <property type="match status" value="1"/>
</dbReference>
<dbReference type="SUPFAM" id="SSF46785">
    <property type="entry name" value="Winged helix' DNA-binding domain"/>
    <property type="match status" value="1"/>
</dbReference>
<dbReference type="PROSITE" id="PS01117">
    <property type="entry name" value="HTH_MARR_1"/>
    <property type="match status" value="1"/>
</dbReference>
<dbReference type="PROSITE" id="PS50995">
    <property type="entry name" value="HTH_MARR_2"/>
    <property type="match status" value="1"/>
</dbReference>
<sequence>MLSQEFFNSFITIYRPYLKLAEPILEKHNIYYGQWLILRDIAKHQPTTLIEISHRRAIEKPTARKTLKALIENDLITVENSLEDKRQKFLTLTPKGHELYEIVCLDVQKLQQAVVAKTNISQDQMQETINVMNQIHKILLKETHND</sequence>
<feature type="chain" id="PRO_0000054416" description="Uncharacterized HTH-type transcriptional regulator SAS2155">
    <location>
        <begin position="1"/>
        <end position="146"/>
    </location>
</feature>
<feature type="domain" description="HTH marR-type" evidence="1">
    <location>
        <begin position="1"/>
        <end position="137"/>
    </location>
</feature>
<gene>
    <name type="ordered locus">SAS2155</name>
</gene>
<name>Y2155_STAAS</name>
<keyword id="KW-0238">DNA-binding</keyword>
<keyword id="KW-0804">Transcription</keyword>
<keyword id="KW-0805">Transcription regulation</keyword>
<reference key="1">
    <citation type="journal article" date="2004" name="Proc. Natl. Acad. Sci. U.S.A.">
        <title>Complete genomes of two clinical Staphylococcus aureus strains: evidence for the rapid evolution of virulence and drug resistance.</title>
        <authorList>
            <person name="Holden M.T.G."/>
            <person name="Feil E.J."/>
            <person name="Lindsay J.A."/>
            <person name="Peacock S.J."/>
            <person name="Day N.P.J."/>
            <person name="Enright M.C."/>
            <person name="Foster T.J."/>
            <person name="Moore C.E."/>
            <person name="Hurst L."/>
            <person name="Atkin R."/>
            <person name="Barron A."/>
            <person name="Bason N."/>
            <person name="Bentley S.D."/>
            <person name="Chillingworth C."/>
            <person name="Chillingworth T."/>
            <person name="Churcher C."/>
            <person name="Clark L."/>
            <person name="Corton C."/>
            <person name="Cronin A."/>
            <person name="Doggett J."/>
            <person name="Dowd L."/>
            <person name="Feltwell T."/>
            <person name="Hance Z."/>
            <person name="Harris B."/>
            <person name="Hauser H."/>
            <person name="Holroyd S."/>
            <person name="Jagels K."/>
            <person name="James K.D."/>
            <person name="Lennard N."/>
            <person name="Line A."/>
            <person name="Mayes R."/>
            <person name="Moule S."/>
            <person name="Mungall K."/>
            <person name="Ormond D."/>
            <person name="Quail M.A."/>
            <person name="Rabbinowitsch E."/>
            <person name="Rutherford K.M."/>
            <person name="Sanders M."/>
            <person name="Sharp S."/>
            <person name="Simmonds M."/>
            <person name="Stevens K."/>
            <person name="Whitehead S."/>
            <person name="Barrell B.G."/>
            <person name="Spratt B.G."/>
            <person name="Parkhill J."/>
        </authorList>
    </citation>
    <scope>NUCLEOTIDE SEQUENCE [LARGE SCALE GENOMIC DNA]</scope>
    <source>
        <strain>MSSA476</strain>
    </source>
</reference>
<organism>
    <name type="scientific">Staphylococcus aureus (strain MSSA476)</name>
    <dbReference type="NCBI Taxonomy" id="282459"/>
    <lineage>
        <taxon>Bacteria</taxon>
        <taxon>Bacillati</taxon>
        <taxon>Bacillota</taxon>
        <taxon>Bacilli</taxon>
        <taxon>Bacillales</taxon>
        <taxon>Staphylococcaceae</taxon>
        <taxon>Staphylococcus</taxon>
    </lineage>
</organism>
<protein>
    <recommendedName>
        <fullName>Uncharacterized HTH-type transcriptional regulator SAS2155</fullName>
    </recommendedName>
</protein>
<accession>Q6G757</accession>
<evidence type="ECO:0000255" key="1">
    <source>
        <dbReference type="PROSITE-ProRule" id="PRU00345"/>
    </source>
</evidence>